<organism>
    <name type="scientific">Thermobifida fusca (strain YX)</name>
    <dbReference type="NCBI Taxonomy" id="269800"/>
    <lineage>
        <taxon>Bacteria</taxon>
        <taxon>Bacillati</taxon>
        <taxon>Actinomycetota</taxon>
        <taxon>Actinomycetes</taxon>
        <taxon>Streptosporangiales</taxon>
        <taxon>Nocardiopsidaceae</taxon>
        <taxon>Thermobifida</taxon>
    </lineage>
</organism>
<protein>
    <recommendedName>
        <fullName>D-inositol 3-phosphate glycosyltransferase</fullName>
        <ecNumber evidence="1">2.4.1.250</ecNumber>
    </recommendedName>
    <alternativeName>
        <fullName evidence="1">N-acetylglucosamine-inositol-phosphate N-acetylglucosaminyltransferase</fullName>
        <shortName evidence="1">GlcNAc-Ins-P N-acetylglucosaminyltransferase</shortName>
    </alternativeName>
</protein>
<accession>Q47KS6</accession>
<proteinExistence type="inferred from homology"/>
<reference key="1">
    <citation type="journal article" date="2007" name="J. Bacteriol.">
        <title>Genome sequence and analysis of the soil cellulolytic actinomycete Thermobifida fusca YX.</title>
        <authorList>
            <person name="Lykidis A."/>
            <person name="Mavromatis K."/>
            <person name="Ivanova N."/>
            <person name="Anderson I."/>
            <person name="Land M."/>
            <person name="DiBartolo G."/>
            <person name="Martinez M."/>
            <person name="Lapidus A."/>
            <person name="Lucas S."/>
            <person name="Copeland A."/>
            <person name="Richardson P."/>
            <person name="Wilson D.B."/>
            <person name="Kyrpides N."/>
        </authorList>
    </citation>
    <scope>NUCLEOTIDE SEQUENCE [LARGE SCALE GENOMIC DNA]</scope>
    <source>
        <strain>YX</strain>
    </source>
</reference>
<gene>
    <name evidence="1" type="primary">mshA</name>
    <name type="ordered locus">Tfu_2913</name>
</gene>
<feature type="chain" id="PRO_0000400168" description="D-inositol 3-phosphate glycosyltransferase">
    <location>
        <begin position="1"/>
        <end position="434"/>
    </location>
</feature>
<feature type="binding site" evidence="1">
    <location>
        <position position="26"/>
    </location>
    <ligand>
        <name>1D-myo-inositol 3-phosphate</name>
        <dbReference type="ChEBI" id="CHEBI:58401"/>
    </ligand>
</feature>
<feature type="binding site" evidence="1">
    <location>
        <begin position="32"/>
        <end position="33"/>
    </location>
    <ligand>
        <name>UDP-N-acetyl-alpha-D-glucosamine</name>
        <dbReference type="ChEBI" id="CHEBI:57705"/>
    </ligand>
</feature>
<feature type="binding site" evidence="1">
    <location>
        <begin position="37"/>
        <end position="42"/>
    </location>
    <ligand>
        <name>1D-myo-inositol 3-phosphate</name>
        <dbReference type="ChEBI" id="CHEBI:58401"/>
    </ligand>
</feature>
<feature type="binding site" evidence="1">
    <location>
        <position position="40"/>
    </location>
    <ligand>
        <name>UDP-N-acetyl-alpha-D-glucosamine</name>
        <dbReference type="ChEBI" id="CHEBI:57705"/>
    </ligand>
</feature>
<feature type="binding site" evidence="1">
    <location>
        <position position="95"/>
    </location>
    <ligand>
        <name>1D-myo-inositol 3-phosphate</name>
        <dbReference type="ChEBI" id="CHEBI:58401"/>
    </ligand>
</feature>
<feature type="binding site" evidence="1">
    <location>
        <position position="128"/>
    </location>
    <ligand>
        <name>1D-myo-inositol 3-phosphate</name>
        <dbReference type="ChEBI" id="CHEBI:58401"/>
    </ligand>
</feature>
<feature type="binding site" evidence="1">
    <location>
        <position position="152"/>
    </location>
    <ligand>
        <name>1D-myo-inositol 3-phosphate</name>
        <dbReference type="ChEBI" id="CHEBI:58401"/>
    </ligand>
</feature>
<feature type="binding site" evidence="1">
    <location>
        <position position="172"/>
    </location>
    <ligand>
        <name>1D-myo-inositol 3-phosphate</name>
        <dbReference type="ChEBI" id="CHEBI:58401"/>
    </ligand>
</feature>
<feature type="binding site" evidence="1">
    <location>
        <position position="246"/>
    </location>
    <ligand>
        <name>UDP-N-acetyl-alpha-D-glucosamine</name>
        <dbReference type="ChEBI" id="CHEBI:57705"/>
    </ligand>
</feature>
<feature type="binding site" evidence="1">
    <location>
        <position position="251"/>
    </location>
    <ligand>
        <name>UDP-N-acetyl-alpha-D-glucosamine</name>
        <dbReference type="ChEBI" id="CHEBI:57705"/>
    </ligand>
</feature>
<feature type="binding site" evidence="1">
    <location>
        <position position="321"/>
    </location>
    <ligand>
        <name>Mg(2+)</name>
        <dbReference type="ChEBI" id="CHEBI:18420"/>
    </ligand>
</feature>
<feature type="binding site" evidence="1">
    <location>
        <position position="322"/>
    </location>
    <ligand>
        <name>Mg(2+)</name>
        <dbReference type="ChEBI" id="CHEBI:18420"/>
    </ligand>
</feature>
<feature type="binding site" evidence="1">
    <location>
        <position position="324"/>
    </location>
    <ligand>
        <name>Mg(2+)</name>
        <dbReference type="ChEBI" id="CHEBI:18420"/>
    </ligand>
</feature>
<feature type="binding site" evidence="1">
    <location>
        <position position="334"/>
    </location>
    <ligand>
        <name>UDP-N-acetyl-alpha-D-glucosamine</name>
        <dbReference type="ChEBI" id="CHEBI:57705"/>
    </ligand>
</feature>
<feature type="binding site" evidence="1">
    <location>
        <position position="342"/>
    </location>
    <ligand>
        <name>UDP-N-acetyl-alpha-D-glucosamine</name>
        <dbReference type="ChEBI" id="CHEBI:57705"/>
    </ligand>
</feature>
<feature type="binding site" evidence="1">
    <location>
        <position position="348"/>
    </location>
    <ligand>
        <name>Mg(2+)</name>
        <dbReference type="ChEBI" id="CHEBI:18420"/>
    </ligand>
</feature>
<name>MSHA_THEFY</name>
<evidence type="ECO:0000255" key="1">
    <source>
        <dbReference type="HAMAP-Rule" id="MF_01695"/>
    </source>
</evidence>
<sequence length="434" mass="46721">MASQTPGTEAQSQTVQPGRIAAISLHTSPLDQPGTGDAGGMNVYIVEVAKRLAERGIAVDIFTRATSFEQPPEVELAPGVTVRNIAAGPYGTLDKTALINYLCPFVHGMLRAEAEHLGGSYDLVHTHYWLSGQAGWPVAREWGVPLVHSMHTMARVKNMSLAEGDTPEPEERVRGEDALVALADRLIANTDDEAAQLINYYGASPSRVSTVFPGVDLTTFTPGSRAESLRRLGLPEDTILLLFVGRVQRLKAPDVLLRAAARLLELNPSLRDRLVVAVVGGQSGTGYREPWLLSDLADSLGIADLVRLEPPCPRAELVHYYRAATVTVVPSHSESFGLVAVESQACGTPVVAARVGGLPTAVRDGVSGVLIDGHDPHDYANVLHRMITEPRWRERMGAAGIHHASGLSWESTVDGLLAAYRDALHQCRLTVPCR</sequence>
<keyword id="KW-0328">Glycosyltransferase</keyword>
<keyword id="KW-0460">Magnesium</keyword>
<keyword id="KW-0479">Metal-binding</keyword>
<keyword id="KW-0808">Transferase</keyword>
<comment type="function">
    <text evidence="1">Catalyzes the transfer of a N-acetyl-glucosamine moiety to 1D-myo-inositol 3-phosphate to produce 1D-myo-inositol 2-acetamido-2-deoxy-glucopyranoside 3-phosphate in the mycothiol biosynthesis pathway.</text>
</comment>
<comment type="catalytic activity">
    <reaction evidence="1">
        <text>1D-myo-inositol 3-phosphate + UDP-N-acetyl-alpha-D-glucosamine = 1D-myo-inositol 2-acetamido-2-deoxy-alpha-D-glucopyranoside 3-phosphate + UDP + H(+)</text>
        <dbReference type="Rhea" id="RHEA:26188"/>
        <dbReference type="ChEBI" id="CHEBI:15378"/>
        <dbReference type="ChEBI" id="CHEBI:57705"/>
        <dbReference type="ChEBI" id="CHEBI:58223"/>
        <dbReference type="ChEBI" id="CHEBI:58401"/>
        <dbReference type="ChEBI" id="CHEBI:58892"/>
        <dbReference type="EC" id="2.4.1.250"/>
    </reaction>
</comment>
<comment type="subunit">
    <text evidence="1">Homodimer.</text>
</comment>
<comment type="similarity">
    <text evidence="1">Belongs to the glycosyltransferase group 1 family. MshA subfamily.</text>
</comment>
<dbReference type="EC" id="2.4.1.250" evidence="1"/>
<dbReference type="EMBL" id="CP000088">
    <property type="protein sequence ID" value="AAZ56946.1"/>
    <property type="molecule type" value="Genomic_DNA"/>
</dbReference>
<dbReference type="RefSeq" id="WP_011293336.1">
    <property type="nucleotide sequence ID" value="NC_007333.1"/>
</dbReference>
<dbReference type="SMR" id="Q47KS6"/>
<dbReference type="STRING" id="269800.Tfu_2913"/>
<dbReference type="CAZy" id="GT4">
    <property type="family name" value="Glycosyltransferase Family 4"/>
</dbReference>
<dbReference type="KEGG" id="tfu:Tfu_2913"/>
<dbReference type="eggNOG" id="COG0438">
    <property type="taxonomic scope" value="Bacteria"/>
</dbReference>
<dbReference type="HOGENOM" id="CLU_009583_2_3_11"/>
<dbReference type="OrthoDB" id="9810929at2"/>
<dbReference type="GO" id="GO:0008375">
    <property type="term" value="F:acetylglucosaminyltransferase activity"/>
    <property type="evidence" value="ECO:0007669"/>
    <property type="project" value="UniProtKB-UniRule"/>
</dbReference>
<dbReference type="GO" id="GO:0102710">
    <property type="term" value="F:D-inositol-3-phosphate glycosyltransferase activity"/>
    <property type="evidence" value="ECO:0007669"/>
    <property type="project" value="UniProtKB-EC"/>
</dbReference>
<dbReference type="GO" id="GO:0000287">
    <property type="term" value="F:magnesium ion binding"/>
    <property type="evidence" value="ECO:0007669"/>
    <property type="project" value="UniProtKB-UniRule"/>
</dbReference>
<dbReference type="GO" id="GO:0010125">
    <property type="term" value="P:mycothiol biosynthetic process"/>
    <property type="evidence" value="ECO:0007669"/>
    <property type="project" value="UniProtKB-UniRule"/>
</dbReference>
<dbReference type="CDD" id="cd03800">
    <property type="entry name" value="GT4_sucrose_synthase"/>
    <property type="match status" value="1"/>
</dbReference>
<dbReference type="Gene3D" id="3.40.50.2000">
    <property type="entry name" value="Glycogen Phosphorylase B"/>
    <property type="match status" value="2"/>
</dbReference>
<dbReference type="HAMAP" id="MF_01695">
    <property type="entry name" value="MshA"/>
    <property type="match status" value="1"/>
</dbReference>
<dbReference type="InterPro" id="IPR001296">
    <property type="entry name" value="Glyco_trans_1"/>
</dbReference>
<dbReference type="InterPro" id="IPR028098">
    <property type="entry name" value="Glyco_trans_4-like_N"/>
</dbReference>
<dbReference type="InterPro" id="IPR050194">
    <property type="entry name" value="Glycosyltransferase_grp1"/>
</dbReference>
<dbReference type="InterPro" id="IPR017814">
    <property type="entry name" value="Mycothiol_biosynthesis_MshA"/>
</dbReference>
<dbReference type="NCBIfam" id="TIGR03449">
    <property type="entry name" value="mycothiol_MshA"/>
    <property type="match status" value="1"/>
</dbReference>
<dbReference type="PANTHER" id="PTHR45947">
    <property type="entry name" value="SULFOQUINOVOSYL TRANSFERASE SQD2"/>
    <property type="match status" value="1"/>
</dbReference>
<dbReference type="PANTHER" id="PTHR45947:SF3">
    <property type="entry name" value="SULFOQUINOVOSYL TRANSFERASE SQD2"/>
    <property type="match status" value="1"/>
</dbReference>
<dbReference type="Pfam" id="PF13579">
    <property type="entry name" value="Glyco_trans_4_4"/>
    <property type="match status" value="1"/>
</dbReference>
<dbReference type="Pfam" id="PF00534">
    <property type="entry name" value="Glycos_transf_1"/>
    <property type="match status" value="1"/>
</dbReference>
<dbReference type="SUPFAM" id="SSF53756">
    <property type="entry name" value="UDP-Glycosyltransferase/glycogen phosphorylase"/>
    <property type="match status" value="1"/>
</dbReference>